<evidence type="ECO:0000255" key="1">
    <source>
        <dbReference type="HAMAP-Rule" id="MF_00083"/>
    </source>
</evidence>
<reference key="1">
    <citation type="submission" date="2002-03" db="EMBL/GenBank/DDBJ databases">
        <authorList>
            <person name="Skamrov A.V."/>
            <person name="Gol'dman M.A."/>
            <person name="Feoktistova E.S."/>
            <person name="Bibilashvili R.S."/>
        </authorList>
    </citation>
    <scope>NUCLEOTIDE SEQUENCE [GENOMIC DNA]</scope>
    <source>
        <strain>A5969Var.B</strain>
    </source>
</reference>
<reference key="2">
    <citation type="journal article" date="2003" name="Microbiology">
        <title>The complete genome sequence of the avian pathogen Mycoplasma gallisepticum strain R(low).</title>
        <authorList>
            <person name="Papazisi L."/>
            <person name="Gorton T.S."/>
            <person name="Kutish G."/>
            <person name="Markham P.F."/>
            <person name="Browning G.F."/>
            <person name="Nguyen D.K."/>
            <person name="Swartzell S."/>
            <person name="Madan A."/>
            <person name="Mahairas G."/>
            <person name="Geary S.J."/>
        </authorList>
    </citation>
    <scope>NUCLEOTIDE SEQUENCE [LARGE SCALE GENOMIC DNA]</scope>
    <source>
        <strain>R(low / passage 15 / clone 2)</strain>
    </source>
</reference>
<protein>
    <recommendedName>
        <fullName evidence="1">Peptidyl-tRNA hydrolase</fullName>
        <shortName evidence="1">Pth</shortName>
        <ecNumber evidence="1">3.1.1.29</ecNumber>
    </recommendedName>
</protein>
<comment type="function">
    <text evidence="1">Hydrolyzes ribosome-free peptidyl-tRNAs (with 1 or more amino acids incorporated), which drop off the ribosome during protein synthesis, or as a result of ribosome stalling.</text>
</comment>
<comment type="function">
    <text evidence="1">Catalyzes the release of premature peptidyl moieties from peptidyl-tRNA molecules trapped in stalled 50S ribosomal subunits, and thus maintains levels of free tRNAs and 50S ribosomes.</text>
</comment>
<comment type="catalytic activity">
    <reaction evidence="1">
        <text>an N-acyl-L-alpha-aminoacyl-tRNA + H2O = an N-acyl-L-amino acid + a tRNA + H(+)</text>
        <dbReference type="Rhea" id="RHEA:54448"/>
        <dbReference type="Rhea" id="RHEA-COMP:10123"/>
        <dbReference type="Rhea" id="RHEA-COMP:13883"/>
        <dbReference type="ChEBI" id="CHEBI:15377"/>
        <dbReference type="ChEBI" id="CHEBI:15378"/>
        <dbReference type="ChEBI" id="CHEBI:59874"/>
        <dbReference type="ChEBI" id="CHEBI:78442"/>
        <dbReference type="ChEBI" id="CHEBI:138191"/>
        <dbReference type="EC" id="3.1.1.29"/>
    </reaction>
</comment>
<comment type="subunit">
    <text evidence="1">Monomer.</text>
</comment>
<comment type="subcellular location">
    <subcellularLocation>
        <location evidence="1">Cytoplasm</location>
    </subcellularLocation>
</comment>
<comment type="similarity">
    <text evidence="1">Belongs to the PTH family.</text>
</comment>
<accession>Q8RLD7</accession>
<keyword id="KW-0963">Cytoplasm</keyword>
<keyword id="KW-0378">Hydrolase</keyword>
<keyword id="KW-1185">Reference proteome</keyword>
<keyword id="KW-0694">RNA-binding</keyword>
<keyword id="KW-0820">tRNA-binding</keyword>
<sequence>MKLIVGLGNPGFEYEHTRHNIGFKIIDKLLDVLNLELNKSQFNGLYVKHDDFIIAKPLTYMNLSGNFIRQLVNFYKIQIDDILVIHDELAFNLGVVRLKQNGSANGQKGVANIISQLGTQNFKRLRVGIKNEDLKNIASFVLSKFAPNELILLESAIASASVIAYDFLKSNKSFSKLMNEYNQ</sequence>
<dbReference type="EC" id="3.1.1.29" evidence="1"/>
<dbReference type="EMBL" id="AY081866">
    <property type="protein sequence ID" value="AAL91134.1"/>
    <property type="molecule type" value="Genomic_DNA"/>
</dbReference>
<dbReference type="EMBL" id="AE015450">
    <property type="protein sequence ID" value="AAP57016.2"/>
    <property type="molecule type" value="Genomic_DNA"/>
</dbReference>
<dbReference type="RefSeq" id="WP_011113927.1">
    <property type="nucleotide sequence ID" value="NC_004829.2"/>
</dbReference>
<dbReference type="SMR" id="Q8RLD7"/>
<dbReference type="GeneID" id="93510504"/>
<dbReference type="KEGG" id="mga:MGA_0506"/>
<dbReference type="PATRIC" id="fig|233150.7.peg.744"/>
<dbReference type="HOGENOM" id="CLU_062456_4_1_14"/>
<dbReference type="OrthoDB" id="9800507at2"/>
<dbReference type="Proteomes" id="UP000001418">
    <property type="component" value="Chromosome"/>
</dbReference>
<dbReference type="GO" id="GO:0005737">
    <property type="term" value="C:cytoplasm"/>
    <property type="evidence" value="ECO:0007669"/>
    <property type="project" value="UniProtKB-SubCell"/>
</dbReference>
<dbReference type="GO" id="GO:0004045">
    <property type="term" value="F:peptidyl-tRNA hydrolase activity"/>
    <property type="evidence" value="ECO:0007669"/>
    <property type="project" value="UniProtKB-UniRule"/>
</dbReference>
<dbReference type="GO" id="GO:0000049">
    <property type="term" value="F:tRNA binding"/>
    <property type="evidence" value="ECO:0007669"/>
    <property type="project" value="UniProtKB-UniRule"/>
</dbReference>
<dbReference type="GO" id="GO:0006515">
    <property type="term" value="P:protein quality control for misfolded or incompletely synthesized proteins"/>
    <property type="evidence" value="ECO:0007669"/>
    <property type="project" value="UniProtKB-UniRule"/>
</dbReference>
<dbReference type="GO" id="GO:0072344">
    <property type="term" value="P:rescue of stalled ribosome"/>
    <property type="evidence" value="ECO:0007669"/>
    <property type="project" value="UniProtKB-UniRule"/>
</dbReference>
<dbReference type="CDD" id="cd00462">
    <property type="entry name" value="PTH"/>
    <property type="match status" value="1"/>
</dbReference>
<dbReference type="FunFam" id="3.40.50.1470:FF:000001">
    <property type="entry name" value="Peptidyl-tRNA hydrolase"/>
    <property type="match status" value="1"/>
</dbReference>
<dbReference type="Gene3D" id="3.40.50.1470">
    <property type="entry name" value="Peptidyl-tRNA hydrolase"/>
    <property type="match status" value="1"/>
</dbReference>
<dbReference type="HAMAP" id="MF_00083">
    <property type="entry name" value="Pept_tRNA_hydro_bact"/>
    <property type="match status" value="1"/>
</dbReference>
<dbReference type="InterPro" id="IPR001328">
    <property type="entry name" value="Pept_tRNA_hydro"/>
</dbReference>
<dbReference type="InterPro" id="IPR018171">
    <property type="entry name" value="Pept_tRNA_hydro_CS"/>
</dbReference>
<dbReference type="InterPro" id="IPR036416">
    <property type="entry name" value="Pept_tRNA_hydro_sf"/>
</dbReference>
<dbReference type="NCBIfam" id="TIGR00447">
    <property type="entry name" value="pth"/>
    <property type="match status" value="1"/>
</dbReference>
<dbReference type="PANTHER" id="PTHR17224">
    <property type="entry name" value="PEPTIDYL-TRNA HYDROLASE"/>
    <property type="match status" value="1"/>
</dbReference>
<dbReference type="PANTHER" id="PTHR17224:SF1">
    <property type="entry name" value="PEPTIDYL-TRNA HYDROLASE"/>
    <property type="match status" value="1"/>
</dbReference>
<dbReference type="Pfam" id="PF01195">
    <property type="entry name" value="Pept_tRNA_hydro"/>
    <property type="match status" value="1"/>
</dbReference>
<dbReference type="SUPFAM" id="SSF53178">
    <property type="entry name" value="Peptidyl-tRNA hydrolase-like"/>
    <property type="match status" value="1"/>
</dbReference>
<dbReference type="PROSITE" id="PS01195">
    <property type="entry name" value="PEPT_TRNA_HYDROL_1"/>
    <property type="match status" value="1"/>
</dbReference>
<name>PTH_MYCGA</name>
<organism>
    <name type="scientific">Mycoplasmoides gallisepticum (strain R(low / passage 15 / clone 2))</name>
    <name type="common">Mycoplasma gallisepticum</name>
    <dbReference type="NCBI Taxonomy" id="710127"/>
    <lineage>
        <taxon>Bacteria</taxon>
        <taxon>Bacillati</taxon>
        <taxon>Mycoplasmatota</taxon>
        <taxon>Mycoplasmoidales</taxon>
        <taxon>Mycoplasmoidaceae</taxon>
        <taxon>Mycoplasmoides</taxon>
    </lineage>
</organism>
<feature type="chain" id="PRO_0000187770" description="Peptidyl-tRNA hydrolase">
    <location>
        <begin position="1"/>
        <end position="183"/>
    </location>
</feature>
<feature type="active site" description="Proton acceptor" evidence="1">
    <location>
        <position position="19"/>
    </location>
</feature>
<feature type="binding site" evidence="1">
    <location>
        <position position="14"/>
    </location>
    <ligand>
        <name>tRNA</name>
        <dbReference type="ChEBI" id="CHEBI:17843"/>
    </ligand>
</feature>
<feature type="binding site" evidence="1">
    <location>
        <position position="60"/>
    </location>
    <ligand>
        <name>tRNA</name>
        <dbReference type="ChEBI" id="CHEBI:17843"/>
    </ligand>
</feature>
<feature type="binding site" evidence="1">
    <location>
        <position position="62"/>
    </location>
    <ligand>
        <name>tRNA</name>
        <dbReference type="ChEBI" id="CHEBI:17843"/>
    </ligand>
</feature>
<feature type="site" description="Discriminates between blocked and unblocked aminoacyl-tRNA" evidence="1">
    <location>
        <position position="9"/>
    </location>
</feature>
<feature type="site" description="Stabilizes the basic form of H active site to accept a proton" evidence="1">
    <location>
        <position position="87"/>
    </location>
</feature>
<gene>
    <name evidence="1" type="primary">pth</name>
    <name type="ordered locus">MYCGA6660</name>
    <name type="ORF">MGA_0506</name>
</gene>
<proteinExistence type="inferred from homology"/>